<evidence type="ECO:0000255" key="1"/>
<evidence type="ECO:0000255" key="2">
    <source>
        <dbReference type="PROSITE-ProRule" id="PRU00258"/>
    </source>
</evidence>
<evidence type="ECO:0000255" key="3">
    <source>
        <dbReference type="PROSITE-ProRule" id="PRU01348"/>
    </source>
</evidence>
<evidence type="ECO:0000255" key="4">
    <source>
        <dbReference type="PROSITE-ProRule" id="PRU01363"/>
    </source>
</evidence>
<evidence type="ECO:0000255" key="5">
    <source>
        <dbReference type="PROSITE-ProRule" id="PRU10022"/>
    </source>
</evidence>
<evidence type="ECO:0000256" key="6">
    <source>
        <dbReference type="SAM" id="MobiDB-lite"/>
    </source>
</evidence>
<evidence type="ECO:0000269" key="7">
    <source>
    </source>
</evidence>
<evidence type="ECO:0000303" key="8">
    <source>
    </source>
</evidence>
<evidence type="ECO:0000305" key="9"/>
<evidence type="ECO:0000305" key="10">
    <source>
    </source>
</evidence>
<reference key="1">
    <citation type="journal article" date="2019" name="Chem. Sci.">
        <title>Structure revision of cryptosporioptides and determination of the genetic basis for dimeric xanthone biosynthesis in fungi.</title>
        <authorList>
            <person name="Greco C."/>
            <person name="de Mattos-Shipley K."/>
            <person name="Bailey A.M."/>
            <person name="Mulholland N.P."/>
            <person name="Vincent J.L."/>
            <person name="Willis C.L."/>
            <person name="Cox R.J."/>
            <person name="Simpson T.J."/>
        </authorList>
    </citation>
    <scope>NUCLEOTIDE SEQUENCE [GENOMIC DNA]</scope>
    <scope>FUNCTION</scope>
    <scope>DISRUPTION PHENOTYPE</scope>
    <scope>PATHWAY</scope>
    <source>
        <strain>8999</strain>
    </source>
</reference>
<gene>
    <name evidence="8" type="primary">dmxL2</name>
</gene>
<accession>A0A4P8DJV2</accession>
<feature type="chain" id="PRO_0000453498" description="Highly reducing polyketide synthase dmxL2">
    <location>
        <begin position="1"/>
        <end position="2406"/>
    </location>
</feature>
<feature type="domain" description="Ketosynthase family 3 (KS3)" evidence="3">
    <location>
        <begin position="1"/>
        <end position="399"/>
    </location>
</feature>
<feature type="domain" description="PKS/mFAS DH" evidence="4">
    <location>
        <begin position="962"/>
        <end position="1278"/>
    </location>
</feature>
<feature type="domain" description="Carrier" evidence="2">
    <location>
        <begin position="2318"/>
        <end position="2395"/>
    </location>
</feature>
<feature type="region of interest" description="Disordered" evidence="6">
    <location>
        <begin position="414"/>
        <end position="476"/>
    </location>
</feature>
<feature type="region of interest" description="Malonyl-CoA:ACP transacylase (MAT) domain" evidence="1">
    <location>
        <begin position="574"/>
        <end position="911"/>
    </location>
</feature>
<feature type="region of interest" description="N-terminal hotdog fold" evidence="4">
    <location>
        <begin position="962"/>
        <end position="1096"/>
    </location>
</feature>
<feature type="region of interest" description="Dehydratase (DH) domain" evidence="1">
    <location>
        <begin position="964"/>
        <end position="1273"/>
    </location>
</feature>
<feature type="region of interest" description="C-terminal hotdog fold" evidence="4">
    <location>
        <begin position="1124"/>
        <end position="1278"/>
    </location>
</feature>
<feature type="region of interest" description="Enoylreductase (ER) domain" evidence="1">
    <location>
        <begin position="1694"/>
        <end position="2006"/>
    </location>
</feature>
<feature type="region of interest" description="Ketoreductase (KR) domain" evidence="1">
    <location>
        <begin position="2032"/>
        <end position="2210"/>
    </location>
</feature>
<feature type="compositionally biased region" description="Polar residues" evidence="6">
    <location>
        <begin position="417"/>
        <end position="448"/>
    </location>
</feature>
<feature type="active site" evidence="5">
    <location>
        <position position="130"/>
    </location>
</feature>
<feature type="active site" description="For beta-ketoacyl synthase activity" evidence="5">
    <location>
        <position position="130"/>
    </location>
</feature>
<feature type="active site" description="For malonyltransferase activity" evidence="5">
    <location>
        <position position="665"/>
    </location>
</feature>
<feature type="active site" description="Proton acceptor; for dehydratase activity" evidence="4">
    <location>
        <position position="994"/>
    </location>
</feature>
<feature type="active site" description="Proton donor; for dehydratase activity" evidence="4">
    <location>
        <position position="1189"/>
    </location>
</feature>
<feature type="modified residue" description="O-(pantetheine 4'-phosphoryl)serine" evidence="2">
    <location>
        <position position="2355"/>
    </location>
</feature>
<keyword id="KW-0012">Acyltransferase</keyword>
<keyword id="KW-0511">Multifunctional enzyme</keyword>
<keyword id="KW-0521">NADP</keyword>
<keyword id="KW-0560">Oxidoreductase</keyword>
<keyword id="KW-0596">Phosphopantetheine</keyword>
<keyword id="KW-0597">Phosphoprotein</keyword>
<keyword id="KW-0808">Transferase</keyword>
<name>DMXL2_CRYX8</name>
<organism>
    <name type="scientific">Cryptosporiopsis sp. (strain 8999)</name>
    <dbReference type="NCBI Taxonomy" id="2572248"/>
    <lineage>
        <taxon>Eukaryota</taxon>
        <taxon>Fungi</taxon>
        <taxon>Dikarya</taxon>
        <taxon>Ascomycota</taxon>
        <taxon>Pezizomycotina</taxon>
        <taxon>Leotiomycetes</taxon>
        <taxon>Helotiales</taxon>
        <taxon>Dermateaceae</taxon>
        <taxon>Cryptosporiopsis</taxon>
    </lineage>
</organism>
<comment type="function">
    <text evidence="7 10">Highly reducing polyketide synthase; part of the gene cluster that mediates the biosynthesis of the dimeric xanthones cryptosporioptides (PubMed:30996871). The pathway begins with the synthesis of atrochrysone thioester by the polyketide synthase dmx-nrPKS (Probable). The atrochrysone carboxyl ACP thioesterase dmxR1 then breaks the thioester bond and releases the atrochrysone carboxylic acid from dmx-nrPKS (Probable). Atrochrysone carboxylic acid is decarboxylated by the decarboxylase dmxR15, and oxidized by the anthrone oxygenase dmxR16 to yield emodin (Probable). Emodin is then reduced to emodin hydroquinone by the oxidoreductase dmxR7 (Probable). A-ring reduction by the short chain dehydrogenase dmxR18, dehydration by the scytalone dehydratase-like protein dmxR17 and probable spontaneous re-oxidation, results in overall deoxygenation to chrysophanol (PubMed:30996871). Baeyer-Villiger oxidation by the Baeyer-Villiger monooxygenase (BVMO) dmxR6 then yields monodictylactone in equilibrium with monodictyphenone (PubMed:30996871). In the case of the cryptosporioptides biosynthesis, monodictylactone is reduced at C-12 to an alcohol (by the short chain dehydrogenases dmxR12 or dmxR8) and hydroxylated at C-5 by dmxR9, yielding the electron-rich aromatic which could eliminate H(2)O to form the ortho-quinonemethide, followed by tautomerisation to paraquinone and complete the formal reduction to produce the 10-methylgroup (Probable). Conjugate addition of C-4a-OH to the resulting paraquinone by the monooxygenase dmxR10 then gives cyclohexadienone, which is then reduced at C-5 by the short chain dehydrogenase dmxR3 to give the dihydroxanthone (Probable). The 6,7-epoxide in the cryptosporioptides could be introduced by the cytochrome P450 monooxygenase dmxL3 (Probable). The highly reducing PKS dmxL2 manufactures butyrate, which is further carboxylated by dmxL1 to form ethylmalonate (PubMed:30996871). It is not yet clear whether the carboxylation occurs while the butyrate is attached to the ACP of dmxL2, but this unusual fungal metabolite could then be esterified to O-5 by the O-acetyltransferase dmxR13 (PubMed:30996871). Finally, dimerization performed by dmxR5 gives the observed dimers cryptosporioptides A, B and C as the final products of the pathway (PubMed:30996871).</text>
</comment>
<comment type="pathway">
    <text evidence="7">Secondary metabolite biosynthesis.</text>
</comment>
<comment type="domain">
    <text evidence="9">Multidomain protein; including a ketosynthase (KS) that catalyzes repeated decarboxylative condensation to elongate the polyketide backbone; a malonyl-CoA:ACP transacylase (MAT) that selects and transfers the extender unit malonyl-CoA; a dehydratase (DH) domain that reduces hydroxyl groups to enoyl groups; an enoyl reductase (ER) domain that reduces enoyl groups to alkyl group; a ketoreductase (KR) domain that catalyzes beta-ketoreduction steps; and an acyl-carrier protein (ACP) that serves as the tether of the growing and completed polyketide via its phosphopantetheinyl arm.</text>
</comment>
<comment type="disruption phenotype">
    <text evidence="7">Abolished production of cryptosprioptide B and C, and produces exclusively cryptosporioptide A.</text>
</comment>
<proteinExistence type="inferred from homology"/>
<protein>
    <recommendedName>
        <fullName evidence="8">Highly reducing polyketide synthase dmxL2</fullName>
        <ecNumber evidence="10">2.3.1.-</ecNumber>
    </recommendedName>
    <alternativeName>
        <fullName evidence="8">Dimeric xanthone biosynthesis cluster protein L2</fullName>
    </alternativeName>
</protein>
<sequence length="2406" mass="260448">MEAFWSASKKRSTSVAKGAHFLRQDISRFDANFFGLPKHEADAMDPQQRIMMEVAYEALEGAGLPLDQIAGSRTGVFVGHFSNDYRDMICRDPDDAPLYSFTGTSTASLANRLSYLWDLRGPSFSINTACSSSLVALHLACQSLQRGECEIAIVGGSNLLLNPEMFMFLSNQGFLSPDGKCKSFDESANGYGRGEGFGCVILKRVDDAVLAGDAIRAVIRGTGSNQDGRTKGLTTPSAEAQRALIEEVYQRAGLDFKTTGYTEAHGTGTQAGDSQEMNALAKTIAATHTAESKLIVGSVKSNVSQSSAQNSCRFLTCLQIGHLEAAAGIASVIKAVLMLERGLIPPTIHFKKGNPKIPFDEWNIRVPTTLTPWPTDGVRRISINSFGYSGTNAHAVLDDAYHYLEAKKHAFDKGHASNGTNGTLTNGHILNGEHTSNGMNGTLTNGHASNDEHALNGTNDALTNGHGPTDGPTSRPRLFIWSAQDKDGLKRVREPLAQYIQAKAAEYQQDQSLKTEETFMSELAYTLSERRSRLQWKTYTIASSPSTLSASLSLGEEASATPVALSSRNPRIGFVFTGQGAQWPRMGAELMAYPAFRECIEAAGSYLQGVCGCPWSAAEELQKHKSISLVNSSAYSHALCTILQVALVDLLRTWGITPTAVVGHSGGEIASAYAFGALTREDAWRVAYHRGRLSAAIKTKAPGLNGAMMAVALSPEQAAEWISKVTDGHLVVACINSPTSVTIAGDSLGIDQLLGMLQEKGGIFARKLLVDTAYHSPHMKIIADDYHAMISDVMPRAAQGGCIMSSSVTGAVVEATQLGADYWTASLTSPVRFSEAIYDMLRPIRGKTRLEENTVDVLVEVGPHSALQGPATQSIKVHNIANVPYYSVLRRNQDAVDTALNLAGSLFTQGYKVDIRQVNDDGDAHFAAPLTDLPTYSWNHSQRFWHESRMEREFRSRAAPKPSLLGSPSPSLAEGERIWRGFIRPAEAPWVNDHKIHGAVLYPGAGYLAMALEAATQTADTTRRVVAYKLRDIQLTAAALVADGANLEYIVQLRPHVVGNRDSTAAWTEFIVTTAPDGKALVQNCRGLLVIEYEAAEGSDTSRERSLELQGWKTQYVDAQQACVHRLDPSGFYSDMRSWGLDYGPAFANVCEVRNRDGQSVGSVRIPDIPAPIVDGSDRPHVVHPGTLDAVFHLAFAAAKGGAYAPSTAMVPKSIDAITIAANVPFQAGTRLPGFSRAGRHGLNELVADIVMLDDTEHLPAIVIEGFLCAEIAGASSNSADNSAKSLASRVTWRPALGLLSSDDLCSALSAHIGEAKLVEYLKLFHHSNPVLSVLEVAAVPNPQEPTPTPLLQRECLASVAKTWDVTTACRDETLKTSMRQEAALEVLDFGQDLDTDVPEAYDLLIASDLSLYASDPVPAVERMCKVLKQGGAICILTTDSIFLRIQPFLDACHMEVTVLPNPHGSDAAPSQDPSLIIAKKSLPYTNGINGAAARPQQVTLIQAAHPTEAAIAMASQLTVSLEEHGYEAHVVSWGSDMSTLAGKSCISLVEFQKTLLQDLAVDDFQSVKKLLLETGKLLWVTALDDPSAAMIDGLVRVVRNETPGLSLRVFHADEPTLAPAERLAGMLAKAFLWTGQDNEFRVQGNLLHVSRIEEDTTLNEEIHGLLPGAARTISRIPLKDVQYPVKLCVQTPGMLGSVCLEPDDSAETVLGPDFIEIHVKATALNFREVMVAMGQMADSKLGIDAAGVVRRVGSSVTKFKVGDKVAMYGHGAHRTIHRSRADYCALIPDGMSFEEAATIPAVHGTAWNALVRLARVQKGQSILIHAAAGGVGQVAVQIARHTGMEIFATVSSEAKRKLLRDEYGVPDDHIFNSRDLSFVKGVKRMTNGRGVDVVLNSLAGEALRQTWHCIAPFGYFVEIGVRDIINNTGLDMRPFMQDATFSFFNLTHIEQDRPDIMGAIIQGAFDFLRRGITQLVTPMVTFPISDVEGALRLMQTGKHLGKIALSWDEDHAEPISVVQPRMRAPKLDPDGVYLLVGGLGGLGRSLSSKLVSLGARRLCFLSRSGARSANAKDLIDKLEQQQVRVQIQTCDVADESAIASAVDRCTRELGKIRGVFQCAMVLRDGLFANMTHQQWVESTRPKVQGSWNLHQHLPDDLDFFITLSSFTATFGSRGQSNYAAAGAYEDALAYHRRTRGRHATTVDLGIMRDVGVLAETGMTDAFREWEKPYGIRESEFLVLMERVIDRDIAAIMPPQVLTGFATGGSVSSAGISTPYYMEDARFSILARTGVRDDGASAASTDAVPAYTLVSQAKSFQEASDSVLEALVRQVAKMFQTPPSEIDTSRFLHSYGIDSLVAIEIVNWVMREAKSTMTVFDVLAGVPMTTFCNRIAAKSTVLPKELVPVH</sequence>
<dbReference type="EC" id="2.3.1.-" evidence="10"/>
<dbReference type="EMBL" id="MK182094">
    <property type="protein sequence ID" value="QCL09089.1"/>
    <property type="molecule type" value="Genomic_DNA"/>
</dbReference>
<dbReference type="SMR" id="A0A4P8DJV2"/>
<dbReference type="GO" id="GO:0004315">
    <property type="term" value="F:3-oxoacyl-[acyl-carrier-protein] synthase activity"/>
    <property type="evidence" value="ECO:0007669"/>
    <property type="project" value="InterPro"/>
</dbReference>
<dbReference type="GO" id="GO:0004312">
    <property type="term" value="F:fatty acid synthase activity"/>
    <property type="evidence" value="ECO:0007669"/>
    <property type="project" value="TreeGrafter"/>
</dbReference>
<dbReference type="GO" id="GO:0016491">
    <property type="term" value="F:oxidoreductase activity"/>
    <property type="evidence" value="ECO:0007669"/>
    <property type="project" value="UniProtKB-KW"/>
</dbReference>
<dbReference type="GO" id="GO:0031177">
    <property type="term" value="F:phosphopantetheine binding"/>
    <property type="evidence" value="ECO:0007669"/>
    <property type="project" value="InterPro"/>
</dbReference>
<dbReference type="GO" id="GO:0008270">
    <property type="term" value="F:zinc ion binding"/>
    <property type="evidence" value="ECO:0007669"/>
    <property type="project" value="InterPro"/>
</dbReference>
<dbReference type="GO" id="GO:0006633">
    <property type="term" value="P:fatty acid biosynthetic process"/>
    <property type="evidence" value="ECO:0007669"/>
    <property type="project" value="InterPro"/>
</dbReference>
<dbReference type="GO" id="GO:0044550">
    <property type="term" value="P:secondary metabolite biosynthetic process"/>
    <property type="evidence" value="ECO:0007669"/>
    <property type="project" value="UniProtKB-ARBA"/>
</dbReference>
<dbReference type="CDD" id="cd05195">
    <property type="entry name" value="enoyl_red"/>
    <property type="match status" value="1"/>
</dbReference>
<dbReference type="CDD" id="cd05274">
    <property type="entry name" value="KR_FAS_SDR_x"/>
    <property type="match status" value="1"/>
</dbReference>
<dbReference type="CDD" id="cd00833">
    <property type="entry name" value="PKS"/>
    <property type="match status" value="1"/>
</dbReference>
<dbReference type="FunFam" id="3.40.50.720:FF:000209">
    <property type="entry name" value="Polyketide synthase Pks12"/>
    <property type="match status" value="1"/>
</dbReference>
<dbReference type="Gene3D" id="3.40.47.10">
    <property type="match status" value="1"/>
</dbReference>
<dbReference type="Gene3D" id="1.10.1200.10">
    <property type="entry name" value="ACP-like"/>
    <property type="match status" value="1"/>
</dbReference>
<dbReference type="Gene3D" id="3.40.366.10">
    <property type="entry name" value="Malonyl-Coenzyme A Acyl Carrier Protein, domain 2"/>
    <property type="match status" value="1"/>
</dbReference>
<dbReference type="Gene3D" id="3.90.180.10">
    <property type="entry name" value="Medium-chain alcohol dehydrogenases, catalytic domain"/>
    <property type="match status" value="1"/>
</dbReference>
<dbReference type="Gene3D" id="3.40.50.720">
    <property type="entry name" value="NAD(P)-binding Rossmann-like Domain"/>
    <property type="match status" value="3"/>
</dbReference>
<dbReference type="Gene3D" id="3.10.129.110">
    <property type="entry name" value="Polyketide synthase dehydratase"/>
    <property type="match status" value="1"/>
</dbReference>
<dbReference type="InterPro" id="IPR001227">
    <property type="entry name" value="Ac_transferase_dom_sf"/>
</dbReference>
<dbReference type="InterPro" id="IPR036736">
    <property type="entry name" value="ACP-like_sf"/>
</dbReference>
<dbReference type="InterPro" id="IPR014043">
    <property type="entry name" value="Acyl_transferase_dom"/>
</dbReference>
<dbReference type="InterPro" id="IPR016035">
    <property type="entry name" value="Acyl_Trfase/lysoPLipase"/>
</dbReference>
<dbReference type="InterPro" id="IPR013149">
    <property type="entry name" value="ADH-like_C"/>
</dbReference>
<dbReference type="InterPro" id="IPR013154">
    <property type="entry name" value="ADH-like_N"/>
</dbReference>
<dbReference type="InterPro" id="IPR011032">
    <property type="entry name" value="GroES-like_sf"/>
</dbReference>
<dbReference type="InterPro" id="IPR018201">
    <property type="entry name" value="Ketoacyl_synth_AS"/>
</dbReference>
<dbReference type="InterPro" id="IPR014031">
    <property type="entry name" value="Ketoacyl_synth_C"/>
</dbReference>
<dbReference type="InterPro" id="IPR014030">
    <property type="entry name" value="Ketoacyl_synth_N"/>
</dbReference>
<dbReference type="InterPro" id="IPR016036">
    <property type="entry name" value="Malonyl_transacylase_ACP-bd"/>
</dbReference>
<dbReference type="InterPro" id="IPR036291">
    <property type="entry name" value="NAD(P)-bd_dom_sf"/>
</dbReference>
<dbReference type="InterPro" id="IPR032821">
    <property type="entry name" value="PKS_assoc"/>
</dbReference>
<dbReference type="InterPro" id="IPR020841">
    <property type="entry name" value="PKS_Beta-ketoAc_synthase_dom"/>
</dbReference>
<dbReference type="InterPro" id="IPR042104">
    <property type="entry name" value="PKS_dehydratase_sf"/>
</dbReference>
<dbReference type="InterPro" id="IPR020807">
    <property type="entry name" value="PKS_DH"/>
</dbReference>
<dbReference type="InterPro" id="IPR049551">
    <property type="entry name" value="PKS_DH_C"/>
</dbReference>
<dbReference type="InterPro" id="IPR049552">
    <property type="entry name" value="PKS_DH_N"/>
</dbReference>
<dbReference type="InterPro" id="IPR020843">
    <property type="entry name" value="PKS_ER"/>
</dbReference>
<dbReference type="InterPro" id="IPR013968">
    <property type="entry name" value="PKS_KR"/>
</dbReference>
<dbReference type="InterPro" id="IPR049900">
    <property type="entry name" value="PKS_mFAS_DH"/>
</dbReference>
<dbReference type="InterPro" id="IPR050091">
    <property type="entry name" value="PKS_NRPS_Biosynth_Enz"/>
</dbReference>
<dbReference type="InterPro" id="IPR020806">
    <property type="entry name" value="PKS_PP-bd"/>
</dbReference>
<dbReference type="InterPro" id="IPR009081">
    <property type="entry name" value="PP-bd_ACP"/>
</dbReference>
<dbReference type="InterPro" id="IPR006162">
    <property type="entry name" value="Ppantetheine_attach_site"/>
</dbReference>
<dbReference type="InterPro" id="IPR002364">
    <property type="entry name" value="Quin_OxRdtase/zeta-crystal_CS"/>
</dbReference>
<dbReference type="InterPro" id="IPR016039">
    <property type="entry name" value="Thiolase-like"/>
</dbReference>
<dbReference type="PANTHER" id="PTHR43775:SF29">
    <property type="entry name" value="ASPERFURANONE POLYKETIDE SYNTHASE AFOG-RELATED"/>
    <property type="match status" value="1"/>
</dbReference>
<dbReference type="PANTHER" id="PTHR43775">
    <property type="entry name" value="FATTY ACID SYNTHASE"/>
    <property type="match status" value="1"/>
</dbReference>
<dbReference type="Pfam" id="PF23297">
    <property type="entry name" value="ACP_SdgA_C"/>
    <property type="match status" value="1"/>
</dbReference>
<dbReference type="Pfam" id="PF00698">
    <property type="entry name" value="Acyl_transf_1"/>
    <property type="match status" value="1"/>
</dbReference>
<dbReference type="Pfam" id="PF08240">
    <property type="entry name" value="ADH_N"/>
    <property type="match status" value="1"/>
</dbReference>
<dbReference type="Pfam" id="PF00107">
    <property type="entry name" value="ADH_zinc_N"/>
    <property type="match status" value="1"/>
</dbReference>
<dbReference type="Pfam" id="PF16197">
    <property type="entry name" value="KAsynt_C_assoc"/>
    <property type="match status" value="1"/>
</dbReference>
<dbReference type="Pfam" id="PF00109">
    <property type="entry name" value="ketoacyl-synt"/>
    <property type="match status" value="1"/>
</dbReference>
<dbReference type="Pfam" id="PF02801">
    <property type="entry name" value="Ketoacyl-synt_C"/>
    <property type="match status" value="1"/>
</dbReference>
<dbReference type="Pfam" id="PF08659">
    <property type="entry name" value="KR"/>
    <property type="match status" value="1"/>
</dbReference>
<dbReference type="Pfam" id="PF21089">
    <property type="entry name" value="PKS_DH_N"/>
    <property type="match status" value="1"/>
</dbReference>
<dbReference type="Pfam" id="PF14765">
    <property type="entry name" value="PS-DH"/>
    <property type="match status" value="1"/>
</dbReference>
<dbReference type="SMART" id="SM00827">
    <property type="entry name" value="PKS_AT"/>
    <property type="match status" value="1"/>
</dbReference>
<dbReference type="SMART" id="SM00826">
    <property type="entry name" value="PKS_DH"/>
    <property type="match status" value="1"/>
</dbReference>
<dbReference type="SMART" id="SM00829">
    <property type="entry name" value="PKS_ER"/>
    <property type="match status" value="1"/>
</dbReference>
<dbReference type="SMART" id="SM00822">
    <property type="entry name" value="PKS_KR"/>
    <property type="match status" value="1"/>
</dbReference>
<dbReference type="SMART" id="SM00825">
    <property type="entry name" value="PKS_KS"/>
    <property type="match status" value="1"/>
</dbReference>
<dbReference type="SMART" id="SM00823">
    <property type="entry name" value="PKS_PP"/>
    <property type="match status" value="1"/>
</dbReference>
<dbReference type="SUPFAM" id="SSF47336">
    <property type="entry name" value="ACP-like"/>
    <property type="match status" value="1"/>
</dbReference>
<dbReference type="SUPFAM" id="SSF52151">
    <property type="entry name" value="FabD/lysophospholipase-like"/>
    <property type="match status" value="1"/>
</dbReference>
<dbReference type="SUPFAM" id="SSF50129">
    <property type="entry name" value="GroES-like"/>
    <property type="match status" value="1"/>
</dbReference>
<dbReference type="SUPFAM" id="SSF51735">
    <property type="entry name" value="NAD(P)-binding Rossmann-fold domains"/>
    <property type="match status" value="2"/>
</dbReference>
<dbReference type="SUPFAM" id="SSF55048">
    <property type="entry name" value="Probable ACP-binding domain of malonyl-CoA ACP transacylase"/>
    <property type="match status" value="1"/>
</dbReference>
<dbReference type="SUPFAM" id="SSF53901">
    <property type="entry name" value="Thiolase-like"/>
    <property type="match status" value="1"/>
</dbReference>
<dbReference type="PROSITE" id="PS50075">
    <property type="entry name" value="CARRIER"/>
    <property type="match status" value="1"/>
</dbReference>
<dbReference type="PROSITE" id="PS00606">
    <property type="entry name" value="KS3_1"/>
    <property type="match status" value="1"/>
</dbReference>
<dbReference type="PROSITE" id="PS52004">
    <property type="entry name" value="KS3_2"/>
    <property type="match status" value="1"/>
</dbReference>
<dbReference type="PROSITE" id="PS00012">
    <property type="entry name" value="PHOSPHOPANTETHEINE"/>
    <property type="match status" value="1"/>
</dbReference>
<dbReference type="PROSITE" id="PS52019">
    <property type="entry name" value="PKS_MFAS_DH"/>
    <property type="match status" value="1"/>
</dbReference>
<dbReference type="PROSITE" id="PS01162">
    <property type="entry name" value="QOR_ZETA_CRYSTAL"/>
    <property type="match status" value="1"/>
</dbReference>